<name>RS7_MESHJ</name>
<accession>Q4AAQ5</accession>
<evidence type="ECO:0000255" key="1">
    <source>
        <dbReference type="HAMAP-Rule" id="MF_00480"/>
    </source>
</evidence>
<evidence type="ECO:0000305" key="2"/>
<sequence length="156" mass="18037">MSRKKQAPVRNVLADPVFNSKLITKAINCTMLEGKKTTAQNILYSAFKLVEEKLQKDALEVFRQAVKNVTPLTEVRSRRIGGTNYQVPMEVRQKRQQTLALRWLILFARKRNEKTMIVKLANEIIDAYNKTGGAFKKKEDTHKMAEANRAFAHFKW</sequence>
<comment type="function">
    <text evidence="1">One of the primary rRNA binding proteins, it binds directly to 16S rRNA where it nucleates assembly of the head domain of the 30S subunit. Is located at the subunit interface close to the decoding center, probably blocks exit of the E-site tRNA.</text>
</comment>
<comment type="subunit">
    <text evidence="1">Part of the 30S ribosomal subunit. Contacts proteins S9 and S11.</text>
</comment>
<comment type="similarity">
    <text evidence="1">Belongs to the universal ribosomal protein uS7 family.</text>
</comment>
<feature type="chain" id="PRO_0000226508" description="Small ribosomal subunit protein uS7">
    <location>
        <begin position="1"/>
        <end position="156"/>
    </location>
</feature>
<organism>
    <name type="scientific">Mesomycoplasma hyopneumoniae (strain J / ATCC 25934 / NCTC 10110)</name>
    <name type="common">Mycoplasma hyopneumoniae</name>
    <dbReference type="NCBI Taxonomy" id="262719"/>
    <lineage>
        <taxon>Bacteria</taxon>
        <taxon>Bacillati</taxon>
        <taxon>Mycoplasmatota</taxon>
        <taxon>Mycoplasmoidales</taxon>
        <taxon>Metamycoplasmataceae</taxon>
        <taxon>Mesomycoplasma</taxon>
    </lineage>
</organism>
<dbReference type="EMBL" id="AE017243">
    <property type="protein sequence ID" value="AAZ44166.1"/>
    <property type="molecule type" value="Genomic_DNA"/>
</dbReference>
<dbReference type="RefSeq" id="WP_011205922.1">
    <property type="nucleotide sequence ID" value="NC_007295.1"/>
</dbReference>
<dbReference type="SMR" id="Q4AAQ5"/>
<dbReference type="GeneID" id="41334362"/>
<dbReference type="KEGG" id="mhj:MHJ_0072"/>
<dbReference type="eggNOG" id="COG0049">
    <property type="taxonomic scope" value="Bacteria"/>
</dbReference>
<dbReference type="HOGENOM" id="CLU_072226_1_1_14"/>
<dbReference type="OrthoDB" id="9807653at2"/>
<dbReference type="Proteomes" id="UP000000548">
    <property type="component" value="Chromosome"/>
</dbReference>
<dbReference type="GO" id="GO:0015935">
    <property type="term" value="C:small ribosomal subunit"/>
    <property type="evidence" value="ECO:0007669"/>
    <property type="project" value="InterPro"/>
</dbReference>
<dbReference type="GO" id="GO:0019843">
    <property type="term" value="F:rRNA binding"/>
    <property type="evidence" value="ECO:0007669"/>
    <property type="project" value="UniProtKB-UniRule"/>
</dbReference>
<dbReference type="GO" id="GO:0003735">
    <property type="term" value="F:structural constituent of ribosome"/>
    <property type="evidence" value="ECO:0007669"/>
    <property type="project" value="InterPro"/>
</dbReference>
<dbReference type="GO" id="GO:0000049">
    <property type="term" value="F:tRNA binding"/>
    <property type="evidence" value="ECO:0007669"/>
    <property type="project" value="UniProtKB-UniRule"/>
</dbReference>
<dbReference type="GO" id="GO:0006412">
    <property type="term" value="P:translation"/>
    <property type="evidence" value="ECO:0007669"/>
    <property type="project" value="UniProtKB-UniRule"/>
</dbReference>
<dbReference type="CDD" id="cd14869">
    <property type="entry name" value="uS7_Bacteria"/>
    <property type="match status" value="1"/>
</dbReference>
<dbReference type="FunFam" id="1.10.455.10:FF:000001">
    <property type="entry name" value="30S ribosomal protein S7"/>
    <property type="match status" value="1"/>
</dbReference>
<dbReference type="Gene3D" id="1.10.455.10">
    <property type="entry name" value="Ribosomal protein S7 domain"/>
    <property type="match status" value="1"/>
</dbReference>
<dbReference type="HAMAP" id="MF_00480_B">
    <property type="entry name" value="Ribosomal_uS7_B"/>
    <property type="match status" value="1"/>
</dbReference>
<dbReference type="InterPro" id="IPR000235">
    <property type="entry name" value="Ribosomal_uS7"/>
</dbReference>
<dbReference type="InterPro" id="IPR005717">
    <property type="entry name" value="Ribosomal_uS7_bac/org-type"/>
</dbReference>
<dbReference type="InterPro" id="IPR020606">
    <property type="entry name" value="Ribosomal_uS7_CS"/>
</dbReference>
<dbReference type="InterPro" id="IPR023798">
    <property type="entry name" value="Ribosomal_uS7_dom"/>
</dbReference>
<dbReference type="InterPro" id="IPR036823">
    <property type="entry name" value="Ribosomal_uS7_dom_sf"/>
</dbReference>
<dbReference type="NCBIfam" id="TIGR01029">
    <property type="entry name" value="rpsG_bact"/>
    <property type="match status" value="1"/>
</dbReference>
<dbReference type="PANTHER" id="PTHR11205">
    <property type="entry name" value="RIBOSOMAL PROTEIN S7"/>
    <property type="match status" value="1"/>
</dbReference>
<dbReference type="Pfam" id="PF00177">
    <property type="entry name" value="Ribosomal_S7"/>
    <property type="match status" value="1"/>
</dbReference>
<dbReference type="PIRSF" id="PIRSF002122">
    <property type="entry name" value="RPS7p_RPS7a_RPS5e_RPS7o"/>
    <property type="match status" value="1"/>
</dbReference>
<dbReference type="SUPFAM" id="SSF47973">
    <property type="entry name" value="Ribosomal protein S7"/>
    <property type="match status" value="1"/>
</dbReference>
<dbReference type="PROSITE" id="PS00052">
    <property type="entry name" value="RIBOSOMAL_S7"/>
    <property type="match status" value="1"/>
</dbReference>
<keyword id="KW-0687">Ribonucleoprotein</keyword>
<keyword id="KW-0689">Ribosomal protein</keyword>
<keyword id="KW-0694">RNA-binding</keyword>
<keyword id="KW-0699">rRNA-binding</keyword>
<keyword id="KW-0820">tRNA-binding</keyword>
<gene>
    <name evidence="1" type="primary">rpsG</name>
    <name type="ordered locus">MHJ_0072</name>
</gene>
<protein>
    <recommendedName>
        <fullName evidence="1">Small ribosomal subunit protein uS7</fullName>
    </recommendedName>
    <alternativeName>
        <fullName evidence="2">30S ribosomal protein S7</fullName>
    </alternativeName>
</protein>
<proteinExistence type="inferred from homology"/>
<reference key="1">
    <citation type="journal article" date="2005" name="J. Bacteriol.">
        <title>Swine and poultry pathogens: the complete genome sequences of two strains of Mycoplasma hyopneumoniae and a strain of Mycoplasma synoviae.</title>
        <authorList>
            <person name="Vasconcelos A.T.R."/>
            <person name="Ferreira H.B."/>
            <person name="Bizarro C.V."/>
            <person name="Bonatto S.L."/>
            <person name="Carvalho M.O."/>
            <person name="Pinto P.M."/>
            <person name="Almeida D.F."/>
            <person name="Almeida L.G.P."/>
            <person name="Almeida R."/>
            <person name="Alves-Junior L."/>
            <person name="Assuncao E.N."/>
            <person name="Azevedo V.A.C."/>
            <person name="Bogo M.R."/>
            <person name="Brigido M.M."/>
            <person name="Brocchi M."/>
            <person name="Burity H.A."/>
            <person name="Camargo A.A."/>
            <person name="Camargo S.S."/>
            <person name="Carepo M.S."/>
            <person name="Carraro D.M."/>
            <person name="de Mattos Cascardo J.C."/>
            <person name="Castro L.A."/>
            <person name="Cavalcanti G."/>
            <person name="Chemale G."/>
            <person name="Collevatti R.G."/>
            <person name="Cunha C.W."/>
            <person name="Dallagiovanna B."/>
            <person name="Dambros B.P."/>
            <person name="Dellagostin O.A."/>
            <person name="Falcao C."/>
            <person name="Fantinatti-Garboggini F."/>
            <person name="Felipe M.S.S."/>
            <person name="Fiorentin L."/>
            <person name="Franco G.R."/>
            <person name="Freitas N.S.A."/>
            <person name="Frias D."/>
            <person name="Grangeiro T.B."/>
            <person name="Grisard E.C."/>
            <person name="Guimaraes C.T."/>
            <person name="Hungria M."/>
            <person name="Jardim S.N."/>
            <person name="Krieger M.A."/>
            <person name="Laurino J.P."/>
            <person name="Lima L.F.A."/>
            <person name="Lopes M.I."/>
            <person name="Loreto E.L.S."/>
            <person name="Madeira H.M.F."/>
            <person name="Manfio G.P."/>
            <person name="Maranhao A.Q."/>
            <person name="Martinkovics C.T."/>
            <person name="Medeiros S.R.B."/>
            <person name="Moreira M.A.M."/>
            <person name="Neiva M."/>
            <person name="Ramalho-Neto C.E."/>
            <person name="Nicolas M.F."/>
            <person name="Oliveira S.C."/>
            <person name="Paixao R.F.C."/>
            <person name="Pedrosa F.O."/>
            <person name="Pena S.D.J."/>
            <person name="Pereira M."/>
            <person name="Pereira-Ferrari L."/>
            <person name="Piffer I."/>
            <person name="Pinto L.S."/>
            <person name="Potrich D.P."/>
            <person name="Salim A.C.M."/>
            <person name="Santos F.R."/>
            <person name="Schmitt R."/>
            <person name="Schneider M.P.C."/>
            <person name="Schrank A."/>
            <person name="Schrank I.S."/>
            <person name="Schuck A.F."/>
            <person name="Seuanez H.N."/>
            <person name="Silva D.W."/>
            <person name="Silva R."/>
            <person name="Silva S.C."/>
            <person name="Soares C.M.A."/>
            <person name="Souza K.R.L."/>
            <person name="Souza R.C."/>
            <person name="Staats C.C."/>
            <person name="Steffens M.B.R."/>
            <person name="Teixeira S.M.R."/>
            <person name="Urmenyi T.P."/>
            <person name="Vainstein M.H."/>
            <person name="Zuccherato L.W."/>
            <person name="Simpson A.J.G."/>
            <person name="Zaha A."/>
        </authorList>
    </citation>
    <scope>NUCLEOTIDE SEQUENCE [LARGE SCALE GENOMIC DNA]</scope>
    <source>
        <strain>J / ATCC 25934 / NCTC 10110</strain>
    </source>
</reference>